<evidence type="ECO:0000250" key="1"/>
<evidence type="ECO:0000250" key="2">
    <source>
        <dbReference type="UniProtKB" id="Q8IZY2"/>
    </source>
</evidence>
<evidence type="ECO:0000250" key="3">
    <source>
        <dbReference type="UniProtKB" id="Q91V24"/>
    </source>
</evidence>
<evidence type="ECO:0000255" key="4"/>
<evidence type="ECO:0000255" key="5">
    <source>
        <dbReference type="PROSITE-ProRule" id="PRU00434"/>
    </source>
</evidence>
<evidence type="ECO:0000256" key="6">
    <source>
        <dbReference type="SAM" id="MobiDB-lite"/>
    </source>
</evidence>
<evidence type="ECO:0000269" key="7">
    <source>
    </source>
</evidence>
<evidence type="ECO:0000305" key="8"/>
<gene>
    <name type="primary">Abca7</name>
</gene>
<protein>
    <recommendedName>
        <fullName>ATP-binding cassette sub-family A member 7</fullName>
    </recommendedName>
</protein>
<organism>
    <name type="scientific">Rattus norvegicus</name>
    <name type="common">Rat</name>
    <dbReference type="NCBI Taxonomy" id="10116"/>
    <lineage>
        <taxon>Eukaryota</taxon>
        <taxon>Metazoa</taxon>
        <taxon>Chordata</taxon>
        <taxon>Craniata</taxon>
        <taxon>Vertebrata</taxon>
        <taxon>Euteleostomi</taxon>
        <taxon>Mammalia</taxon>
        <taxon>Eutheria</taxon>
        <taxon>Euarchontoglires</taxon>
        <taxon>Glires</taxon>
        <taxon>Rodentia</taxon>
        <taxon>Myomorpha</taxon>
        <taxon>Muroidea</taxon>
        <taxon>Muridae</taxon>
        <taxon>Murinae</taxon>
        <taxon>Rattus</taxon>
    </lineage>
</organism>
<name>ABCA7_RAT</name>
<dbReference type="EMBL" id="AB097814">
    <property type="protein sequence ID" value="BAC81426.1"/>
    <property type="molecule type" value="mRNA"/>
</dbReference>
<dbReference type="RefSeq" id="NP_997481.1">
    <property type="nucleotide sequence ID" value="NM_207598.1"/>
</dbReference>
<dbReference type="SMR" id="Q7TNJ2"/>
<dbReference type="BioGRID" id="256273">
    <property type="interactions" value="1"/>
</dbReference>
<dbReference type="FunCoup" id="Q7TNJ2">
    <property type="interactions" value="271"/>
</dbReference>
<dbReference type="IntAct" id="Q7TNJ2">
    <property type="interactions" value="1"/>
</dbReference>
<dbReference type="MINT" id="Q7TNJ2"/>
<dbReference type="STRING" id="10116.ENSRNOP00000063805"/>
<dbReference type="GlyCosmos" id="Q7TNJ2">
    <property type="glycosylation" value="1 site, No reported glycans"/>
</dbReference>
<dbReference type="GlyGen" id="Q7TNJ2">
    <property type="glycosylation" value="3 sites"/>
</dbReference>
<dbReference type="iPTMnet" id="Q7TNJ2"/>
<dbReference type="PhosphoSitePlus" id="Q7TNJ2"/>
<dbReference type="PaxDb" id="10116-ENSRNOP00000063805"/>
<dbReference type="GeneID" id="299609"/>
<dbReference type="KEGG" id="rno:299609"/>
<dbReference type="UCSC" id="RGD:1303134">
    <property type="organism name" value="rat"/>
</dbReference>
<dbReference type="AGR" id="RGD:1303134"/>
<dbReference type="CTD" id="10347"/>
<dbReference type="RGD" id="1303134">
    <property type="gene designation" value="Abca7"/>
</dbReference>
<dbReference type="eggNOG" id="KOG0059">
    <property type="taxonomic scope" value="Eukaryota"/>
</dbReference>
<dbReference type="InParanoid" id="Q7TNJ2"/>
<dbReference type="OrthoDB" id="8061355at2759"/>
<dbReference type="PhylomeDB" id="Q7TNJ2"/>
<dbReference type="Reactome" id="R-RNO-1369062">
    <property type="pathway name" value="ABC transporters in lipid homeostasis"/>
</dbReference>
<dbReference type="PRO" id="PR:Q7TNJ2"/>
<dbReference type="Proteomes" id="UP000002494">
    <property type="component" value="Unplaced"/>
</dbReference>
<dbReference type="GO" id="GO:0016324">
    <property type="term" value="C:apical plasma membrane"/>
    <property type="evidence" value="ECO:0000266"/>
    <property type="project" value="RGD"/>
</dbReference>
<dbReference type="GO" id="GO:0009986">
    <property type="term" value="C:cell surface"/>
    <property type="evidence" value="ECO:0000250"/>
    <property type="project" value="Alzheimers_University_of_Toronto"/>
</dbReference>
<dbReference type="GO" id="GO:0005737">
    <property type="term" value="C:cytoplasm"/>
    <property type="evidence" value="ECO:0000250"/>
    <property type="project" value="UniProtKB"/>
</dbReference>
<dbReference type="GO" id="GO:0031901">
    <property type="term" value="C:early endosome membrane"/>
    <property type="evidence" value="ECO:0007669"/>
    <property type="project" value="UniProtKB-SubCell"/>
</dbReference>
<dbReference type="GO" id="GO:0097386">
    <property type="term" value="C:glial cell projection"/>
    <property type="evidence" value="ECO:0000250"/>
    <property type="project" value="UniProtKB"/>
</dbReference>
<dbReference type="GO" id="GO:0000139">
    <property type="term" value="C:Golgi membrane"/>
    <property type="evidence" value="ECO:0007669"/>
    <property type="project" value="UniProtKB-SubCell"/>
</dbReference>
<dbReference type="GO" id="GO:0043231">
    <property type="term" value="C:intracellular membrane-bounded organelle"/>
    <property type="evidence" value="ECO:0000318"/>
    <property type="project" value="GO_Central"/>
</dbReference>
<dbReference type="GO" id="GO:0001891">
    <property type="term" value="C:phagocytic cup"/>
    <property type="evidence" value="ECO:0000250"/>
    <property type="project" value="Alzheimers_University_of_Toronto"/>
</dbReference>
<dbReference type="GO" id="GO:0005886">
    <property type="term" value="C:plasma membrane"/>
    <property type="evidence" value="ECO:0000266"/>
    <property type="project" value="RGD"/>
</dbReference>
<dbReference type="GO" id="GO:0032587">
    <property type="term" value="C:ruffle membrane"/>
    <property type="evidence" value="ECO:0000250"/>
    <property type="project" value="Alzheimers_University_of_Toronto"/>
</dbReference>
<dbReference type="GO" id="GO:0140359">
    <property type="term" value="F:ABC-type transporter activity"/>
    <property type="evidence" value="ECO:0007669"/>
    <property type="project" value="InterPro"/>
</dbReference>
<dbReference type="GO" id="GO:0034188">
    <property type="term" value="F:apolipoprotein A-I receptor activity"/>
    <property type="evidence" value="ECO:0000250"/>
    <property type="project" value="Alzheimers_University_of_Toronto"/>
</dbReference>
<dbReference type="GO" id="GO:0005524">
    <property type="term" value="F:ATP binding"/>
    <property type="evidence" value="ECO:0007669"/>
    <property type="project" value="UniProtKB-KW"/>
</dbReference>
<dbReference type="GO" id="GO:0016887">
    <property type="term" value="F:ATP hydrolysis activity"/>
    <property type="evidence" value="ECO:0007669"/>
    <property type="project" value="InterPro"/>
</dbReference>
<dbReference type="GO" id="GO:0042626">
    <property type="term" value="F:ATPase-coupled transmembrane transporter activity"/>
    <property type="evidence" value="ECO:0000318"/>
    <property type="project" value="GO_Central"/>
</dbReference>
<dbReference type="GO" id="GO:0140328">
    <property type="term" value="F:floppase activity"/>
    <property type="evidence" value="ECO:0000266"/>
    <property type="project" value="RGD"/>
</dbReference>
<dbReference type="GO" id="GO:0090554">
    <property type="term" value="F:phosphatidylcholine floppase activity"/>
    <property type="evidence" value="ECO:0000266"/>
    <property type="project" value="RGD"/>
</dbReference>
<dbReference type="GO" id="GO:0090556">
    <property type="term" value="F:phosphatidylserine floppase activity"/>
    <property type="evidence" value="ECO:0000266"/>
    <property type="project" value="RGD"/>
</dbReference>
<dbReference type="GO" id="GO:0005548">
    <property type="term" value="F:phospholipid transporter activity"/>
    <property type="evidence" value="ECO:0000266"/>
    <property type="project" value="RGD"/>
</dbReference>
<dbReference type="GO" id="GO:0150094">
    <property type="term" value="P:amyloid-beta clearance by cellular catabolic process"/>
    <property type="evidence" value="ECO:0000250"/>
    <property type="project" value="UniProtKB"/>
</dbReference>
<dbReference type="GO" id="GO:0034205">
    <property type="term" value="P:amyloid-beta formation"/>
    <property type="evidence" value="ECO:0000250"/>
    <property type="project" value="UniProtKB"/>
</dbReference>
<dbReference type="GO" id="GO:0038027">
    <property type="term" value="P:apolipoprotein A-I-mediated signaling pathway"/>
    <property type="evidence" value="ECO:0000250"/>
    <property type="project" value="Alzheimers_University_of_Toronto"/>
</dbReference>
<dbReference type="GO" id="GO:0033344">
    <property type="term" value="P:cholesterol efflux"/>
    <property type="evidence" value="ECO:0000250"/>
    <property type="project" value="UniProtKB"/>
</dbReference>
<dbReference type="GO" id="GO:0034380">
    <property type="term" value="P:high-density lipoprotein particle assembly"/>
    <property type="evidence" value="ECO:0000250"/>
    <property type="project" value="Alzheimers_University_of_Toronto"/>
</dbReference>
<dbReference type="GO" id="GO:0007613">
    <property type="term" value="P:memory"/>
    <property type="evidence" value="ECO:0000250"/>
    <property type="project" value="Alzheimers_University_of_Toronto"/>
</dbReference>
<dbReference type="GO" id="GO:0042985">
    <property type="term" value="P:negative regulation of amyloid precursor protein biosynthetic process"/>
    <property type="evidence" value="ECO:0000250"/>
    <property type="project" value="Alzheimers_University_of_Toronto"/>
</dbReference>
<dbReference type="GO" id="GO:1902430">
    <property type="term" value="P:negative regulation of amyloid-beta formation"/>
    <property type="evidence" value="ECO:0000250"/>
    <property type="project" value="Alzheimers_University_of_Toronto"/>
</dbReference>
<dbReference type="GO" id="GO:0045806">
    <property type="term" value="P:negative regulation of endocytosis"/>
    <property type="evidence" value="ECO:0000250"/>
    <property type="project" value="UniProtKB"/>
</dbReference>
<dbReference type="GO" id="GO:0043409">
    <property type="term" value="P:negative regulation of MAPK cascade"/>
    <property type="evidence" value="ECO:0000266"/>
    <property type="project" value="RGD"/>
</dbReference>
<dbReference type="GO" id="GO:1903898">
    <property type="term" value="P:negative regulation of PERK-mediated unfolded protein response"/>
    <property type="evidence" value="ECO:0000266"/>
    <property type="project" value="RGD"/>
</dbReference>
<dbReference type="GO" id="GO:0006909">
    <property type="term" value="P:phagocytosis"/>
    <property type="evidence" value="ECO:0007669"/>
    <property type="project" value="UniProtKB-KW"/>
</dbReference>
<dbReference type="GO" id="GO:0033700">
    <property type="term" value="P:phospholipid efflux"/>
    <property type="evidence" value="ECO:0000250"/>
    <property type="project" value="UniProtKB"/>
</dbReference>
<dbReference type="GO" id="GO:0045332">
    <property type="term" value="P:phospholipid translocation"/>
    <property type="evidence" value="ECO:0000266"/>
    <property type="project" value="RGD"/>
</dbReference>
<dbReference type="GO" id="GO:0044857">
    <property type="term" value="P:plasma membrane raft organization"/>
    <property type="evidence" value="ECO:0000250"/>
    <property type="project" value="UniProtKB"/>
</dbReference>
<dbReference type="GO" id="GO:1900223">
    <property type="term" value="P:positive regulation of amyloid-beta clearance"/>
    <property type="evidence" value="ECO:0000250"/>
    <property type="project" value="Alzheimers_University_of_Toronto"/>
</dbReference>
<dbReference type="GO" id="GO:0010875">
    <property type="term" value="P:positive regulation of cholesterol efflux"/>
    <property type="evidence" value="ECO:0000250"/>
    <property type="project" value="Alzheimers_University_of_Toronto"/>
</dbReference>
<dbReference type="GO" id="GO:1901076">
    <property type="term" value="P:positive regulation of engulfment of apoptotic cell"/>
    <property type="evidence" value="ECO:0000250"/>
    <property type="project" value="Alzheimers_University_of_Toronto"/>
</dbReference>
<dbReference type="GO" id="GO:0070374">
    <property type="term" value="P:positive regulation of ERK1 and ERK2 cascade"/>
    <property type="evidence" value="ECO:0000250"/>
    <property type="project" value="Alzheimers_University_of_Toronto"/>
</dbReference>
<dbReference type="GO" id="GO:0050766">
    <property type="term" value="P:positive regulation of phagocytosis"/>
    <property type="evidence" value="ECO:0000250"/>
    <property type="project" value="Alzheimers_University_of_Toronto"/>
</dbReference>
<dbReference type="GO" id="GO:1902995">
    <property type="term" value="P:positive regulation of phospholipid efflux"/>
    <property type="evidence" value="ECO:0000250"/>
    <property type="project" value="Alzheimers_University_of_Toronto"/>
</dbReference>
<dbReference type="GO" id="GO:2000010">
    <property type="term" value="P:positive regulation of protein localization to cell surface"/>
    <property type="evidence" value="ECO:0000250"/>
    <property type="project" value="UniProtKB"/>
</dbReference>
<dbReference type="GO" id="GO:0034504">
    <property type="term" value="P:protein localization to nucleus"/>
    <property type="evidence" value="ECO:0000250"/>
    <property type="project" value="Alzheimers_University_of_Toronto"/>
</dbReference>
<dbReference type="GO" id="GO:1902991">
    <property type="term" value="P:regulation of amyloid precursor protein catabolic process"/>
    <property type="evidence" value="ECO:0000250"/>
    <property type="project" value="UniProtKB"/>
</dbReference>
<dbReference type="GO" id="GO:0019216">
    <property type="term" value="P:regulation of lipid metabolic process"/>
    <property type="evidence" value="ECO:0000266"/>
    <property type="project" value="RGD"/>
</dbReference>
<dbReference type="GO" id="GO:0008542">
    <property type="term" value="P:visual learning"/>
    <property type="evidence" value="ECO:0000266"/>
    <property type="project" value="RGD"/>
</dbReference>
<dbReference type="CDD" id="cd03263">
    <property type="entry name" value="ABC_subfamily_A"/>
    <property type="match status" value="2"/>
</dbReference>
<dbReference type="FunFam" id="3.40.50.300:FF:001235">
    <property type="entry name" value="ATP binding cassette subfamily A member 7"/>
    <property type="match status" value="1"/>
</dbReference>
<dbReference type="FunFam" id="3.40.50.300:FF:000511">
    <property type="entry name" value="ATP-binding cassette, sub-family A (ABC1), member 2"/>
    <property type="match status" value="1"/>
</dbReference>
<dbReference type="Gene3D" id="3.40.50.300">
    <property type="entry name" value="P-loop containing nucleotide triphosphate hydrolases"/>
    <property type="match status" value="2"/>
</dbReference>
<dbReference type="InterPro" id="IPR003593">
    <property type="entry name" value="AAA+_ATPase"/>
</dbReference>
<dbReference type="InterPro" id="IPR013525">
    <property type="entry name" value="ABC2_TM"/>
</dbReference>
<dbReference type="InterPro" id="IPR003439">
    <property type="entry name" value="ABC_transporter-like_ATP-bd"/>
</dbReference>
<dbReference type="InterPro" id="IPR017871">
    <property type="entry name" value="ABC_transporter-like_CS"/>
</dbReference>
<dbReference type="InterPro" id="IPR026082">
    <property type="entry name" value="ABCA"/>
</dbReference>
<dbReference type="InterPro" id="IPR027417">
    <property type="entry name" value="P-loop_NTPase"/>
</dbReference>
<dbReference type="InterPro" id="IPR056264">
    <property type="entry name" value="R2_ABCA1-4-like"/>
</dbReference>
<dbReference type="PANTHER" id="PTHR19229:SF250">
    <property type="entry name" value="ABC TRANSPORTER DOMAIN-CONTAINING PROTEIN-RELATED"/>
    <property type="match status" value="1"/>
</dbReference>
<dbReference type="PANTHER" id="PTHR19229">
    <property type="entry name" value="ATP-BINDING CASSETTE TRANSPORTER SUBFAMILY A ABCA"/>
    <property type="match status" value="1"/>
</dbReference>
<dbReference type="Pfam" id="PF12698">
    <property type="entry name" value="ABC2_membrane_3"/>
    <property type="match status" value="2"/>
</dbReference>
<dbReference type="Pfam" id="PF00005">
    <property type="entry name" value="ABC_tran"/>
    <property type="match status" value="2"/>
</dbReference>
<dbReference type="Pfam" id="PF23321">
    <property type="entry name" value="R1_ABCA1"/>
    <property type="match status" value="1"/>
</dbReference>
<dbReference type="SMART" id="SM00382">
    <property type="entry name" value="AAA"/>
    <property type="match status" value="2"/>
</dbReference>
<dbReference type="SUPFAM" id="SSF52540">
    <property type="entry name" value="P-loop containing nucleoside triphosphate hydrolases"/>
    <property type="match status" value="2"/>
</dbReference>
<dbReference type="PROSITE" id="PS00211">
    <property type="entry name" value="ABC_TRANSPORTER_1"/>
    <property type="match status" value="1"/>
</dbReference>
<dbReference type="PROSITE" id="PS50893">
    <property type="entry name" value="ABC_TRANSPORTER_2"/>
    <property type="match status" value="2"/>
</dbReference>
<proteinExistence type="evidence at protein level"/>
<sequence length="2170" mass="237720">MAFCTQLMLLLWKNYTYRRRQPIQLVVELLWPLFLFFILVAVRHSHPPLEHHECHFPNKPLPSAGTVPWLQGLVCNVNNSCFQHPTPGEKPGVLSNFKDSLISRLLADAHTVLGGHSTQDMLAALGKLIPVLRAVGSGAWPQESNQPAKQGSVTELLEKILQRASLETVLGQAQDSMRKFSDATRTVAQELLTLPSLVELRALLRRPRGSAGSLELISEALCSTKGPSSPGGLSLNWYEANQINEFMGPELAPTLPDSSLSPACSEFVGALDDHPVSRLLWRRLKPLILGKILFAPDTNFTRKLMAQVNQTFEELALLRDLHELWGVLGPQIFNFMNDSTNVAMLQKLLDVEGTGWQQQTPKGQKQLEAIRDFLDPSRGRYNWQEAHADMGRLAEILGQILECVSLDKLEAVPSEEALVSRALELLGERRLWAGIVFLSPEHPLDSSEPPSPTTTGPGHLRVKIRMDIDDVTRTNKIRDKFWDPGPSADPLMDLRYVWGGFVYLQDLLEQAAVRVLSGRDSRAGLYLQQMPHPCYVDDVFLRVLSRSLPLFLTLAWIYSVALTVKAVVREKETRLRETMRAMGLSRAVLWLGWFLSCLGPFLVSAALLVLVLKLGNILPYSHPVVVFLFLAAFAVATVAQSFLLSAFFSRANLAAACGGLAYFALYLPYVLCVAWRERLPLGGLLAVSLLSPVAFGFGCESLALLEEQGDGAQWHNLGTGPAEDVFSLAQVSAFLLLDAVIYGLALWYLEAVCPGQYGIPEPWNFPFRRSYWCGPGPPKSSVLAPAPQDPKVLVEEPPPGLVPGVSIRGLKKHFRGSPQPALRGLNLDFYEGHITAFLGHNGAGKTTTLSILSGLFPPSSGSASILGHDVQTNMAAIRPHLGICPQYNVLFDMLTVEEHVWFYGRLKGVSAAAIDSEQEHLIRDVGLIPKRDTQTRHLSGGMQRKLSVAIAFVGGSRVVIMDEPTAGVDPASRRGIWELLLKYREGRTLILSTHHLDEAELLGDRVAMVASGSLCCCGSPLFLRRHLGCGYYLTLVKSSQSLVTHDLKGDTEDPRREKKSGSEGKTADTVLTRDGPHRSSQVPAPDAVPVTPSAALILELVQRHVPGAQLVEELPHELVLALPYAGALDGSFATVFQELDQQLERLGLTGYGISDTNLEEIFLKVVEEAHAHGEGGDPRQQQHLLTATPQPHTGPEASVLENGELAKLVLDPQAPKGSAPTTAQVQGWTLTCQQLRALLHKRFLLARRSRRGLFAQIVLPALFVGLALFFTLIVPPFGQYPPLQLSPAMYGPQVSFFSEDAPADPNRMKLLEALLGEAGLQDPSVQGKGSRGSECTHSLACYFTVPEVPPDVASILASGNWTPDSPSPACQCSQPGARRLLPDCPAGAGGPPPPQAMAGFGEVVQNLTGRNVSDFLVKTYPSLVRRGLKTKKWVDEVRYGGFSLGGRDPDLPSGREVVRTVAEMRALLSPQPGNTLDRILNNLTQWALGLDARNSLKIWFNNKGWHAMVAFVNRANNGLLRAFLPSGSVRHAHSITTLNHPLNLTKEQLSEATLIASSVDVLVSICVVFAMSFVPASFTLVLIEERITRAKHLQLVSGLPQTLYWLGNFLWDMCNYLVAVCIVVLIFLAFQQKAYVAPENLPALLLLLLLYGWSITPLMYPASFFFSVPSTAYVVLTCINLFIGINSSMATFVLELLSDQNLQEVSRILKQVFLIFPHFCLGRGLIDMVRNQAMADAFERLGDKQFQSPLRWDIIGKNLLAMVAQGPLFLLITLLLQHRNRLLPQPKSRLPPPLGEEDEDVVRERERVTKGATQGDVLVLRDLTKVYRGQRSPAVDHLCLGIPPGECFGLLGVNGAGKTSTFRMVTGDTLPSSGEAVLAGHNVAQEPSAAHRSMGYCPQSDAIFDLLTGREHLELFARLRGVPEAQVAQTALSGLVRLGLPSYADRPAGTYSGGNKRKLATALALVGDPAVVFLDEPTTGMDPSARRFLWNNLLSVVREGRSVVLTSHSMEECEALCTRLAIMVNGRFRCLGSAQHLKSRFGAGHTLTLRVPPDQPEPAIAFIVTTFPDAELREVHGSRLRFQLPPGGGCTLARVFRELAAQGKAHGVEDFSVSQTTLEEVFLYFSKDQGEEEEGSGQETETREVSTPGLQHPKRVSRFLEDPSSVETVI</sequence>
<accession>Q7TNJ2</accession>
<comment type="function">
    <text evidence="2 3">ATP-binding cassette (ABC) transporter that plays a role in lipid homeostasis and macrophage-mediated phagocytosis (By similarity). Binds APOA1 and may function in apolipoprotein-mediated phospholipid efflux from cells (By similarity). May also mediate cholesterol efflux (By similarity). May regulate cellular ceramide homeostasis during keratinocyte differentiation (By similarity). Involved in lipid raft organization and CD1D localization on thymocytes and antigen-presenting cells, which plays an important role in natural killer T-cell development and activation (By similarity). Plays a role in phagocytosis of apoptotic cells by macrophages (By similarity). Macrophage phagocytosis is stimulated by APOA1 or APOA2, probably by stabilization of ABCA7 (By similarity). Also involved in phagocytic clearance of amyloid-beta by microglia cells and macrophages (By similarity). Further limits amyloid-beta production by playing a role in the regulation of amyloid-beta A4 precursor protein (APP) endocytosis and/or processing (By similarity).</text>
</comment>
<comment type="subcellular location">
    <subcellularLocation>
        <location evidence="7">Cell membrane</location>
        <topology evidence="4">Multi-pass membrane protein</topology>
    </subcellularLocation>
    <subcellularLocation>
        <location evidence="7">Golgi apparatus membrane</location>
        <topology evidence="4">Multi-pass membrane protein</topology>
    </subcellularLocation>
    <subcellularLocation>
        <location evidence="3">Early endosome membrane</location>
        <topology evidence="4">Multi-pass membrane protein</topology>
    </subcellularLocation>
    <subcellularLocation>
        <location evidence="3">Cell projection</location>
        <location evidence="3">Ruffle membrane</location>
    </subcellularLocation>
    <subcellularLocation>
        <location evidence="3">Cell projection</location>
        <location evidence="3">Phagocytic cup</location>
    </subcellularLocation>
    <subcellularLocation>
        <location evidence="3">Cytoplasm</location>
    </subcellularLocation>
    <text evidence="3">Localizes to cell membrane ruffles and phagocytic cups of macrophages stimulated with C1q or apoptotic cells. Localizes to the cytoplasm of resting macrophages, probably in Golgi and endosomes. Localizes to the apical brush border of cells in the proximal tubules of kidney.</text>
</comment>
<comment type="tissue specificity">
    <text evidence="7">Expressed in blood cells. Also detected in brain and ovary tissues (at protein level). Expressed in platelet.</text>
</comment>
<comment type="PTM">
    <text evidence="3">N-glycosylated.</text>
</comment>
<comment type="similarity">
    <text evidence="8">Belongs to the ABC transporter superfamily. ABCA family.</text>
</comment>
<comment type="caution">
    <text evidence="2 3">There are conflicting results concerning the role of ABCA7 in lipid transport. ABCA7 was described to play a role in apolipoprotein-mediated phospholipid and cholesterol efflux when expressed in HEK293 cells (By similarity). However, another report shows that ABCA7 deficiency does not influence cholesterol and phospholipid efflux in mouse primary macrophages, but leads to lower serum HDL cholesterol levels and a reduction in fat mass in female mice (By similarity).</text>
</comment>
<reference key="1">
    <citation type="journal article" date="2003" name="Biochem. Biophys. Res. Commun.">
        <title>Cloning of rat ABCA7 and its preferential expression in platelets.</title>
        <authorList>
            <person name="Sasaki M."/>
            <person name="Shoji A."/>
            <person name="Kubo Y."/>
            <person name="Nada S."/>
            <person name="Yamaguchi A."/>
        </authorList>
    </citation>
    <scope>NUCLEOTIDE SEQUENCE [MRNA]</scope>
    <scope>SUBCELLULAR LOCATION</scope>
    <scope>TISSUE SPECIFICITY</scope>
    <source>
        <strain>Wistar</strain>
        <tissue>Platelet</tissue>
    </source>
</reference>
<feature type="chain" id="PRO_0000250676" description="ATP-binding cassette sub-family A member 7">
    <location>
        <begin position="1"/>
        <end position="2170"/>
    </location>
</feature>
<feature type="transmembrane region" description="Helical" evidence="4">
    <location>
        <begin position="22"/>
        <end position="42"/>
    </location>
</feature>
<feature type="topological domain" description="Extracellular" evidence="1">
    <location>
        <begin position="43"/>
        <end position="547"/>
    </location>
</feature>
<feature type="transmembrane region" description="Helical" evidence="4">
    <location>
        <begin position="548"/>
        <end position="568"/>
    </location>
</feature>
<feature type="transmembrane region" description="Helical" evidence="4">
    <location>
        <begin position="591"/>
        <end position="611"/>
    </location>
</feature>
<feature type="transmembrane region" description="Helical" evidence="4">
    <location>
        <begin position="624"/>
        <end position="644"/>
    </location>
</feature>
<feature type="transmembrane region" description="Helical" evidence="4">
    <location>
        <begin position="653"/>
        <end position="673"/>
    </location>
</feature>
<feature type="transmembrane region" description="Helical" evidence="4">
    <location>
        <begin position="679"/>
        <end position="699"/>
    </location>
</feature>
<feature type="transmembrane region" description="Helical" evidence="4">
    <location>
        <begin position="733"/>
        <end position="753"/>
    </location>
</feature>
<feature type="transmembrane region" description="Helical" evidence="4">
    <location>
        <begin position="847"/>
        <end position="867"/>
    </location>
</feature>
<feature type="transmembrane region" description="Helical" evidence="4">
    <location>
        <begin position="1257"/>
        <end position="1277"/>
    </location>
</feature>
<feature type="topological domain" description="Extracellular" evidence="1">
    <location>
        <begin position="1278"/>
        <end position="1562"/>
    </location>
</feature>
<feature type="transmembrane region" description="Helical" evidence="4">
    <location>
        <begin position="1563"/>
        <end position="1583"/>
    </location>
</feature>
<feature type="transmembrane region" description="Helical" evidence="4">
    <location>
        <begin position="1609"/>
        <end position="1629"/>
    </location>
</feature>
<feature type="transmembrane region" description="Helical" evidence="4">
    <location>
        <begin position="1646"/>
        <end position="1666"/>
    </location>
</feature>
<feature type="transmembrane region" description="Helical" evidence="4">
    <location>
        <begin position="1674"/>
        <end position="1694"/>
    </location>
</feature>
<feature type="transmembrane region" description="Helical" evidence="4">
    <location>
        <begin position="1708"/>
        <end position="1728"/>
    </location>
</feature>
<feature type="transmembrane region" description="Helical" evidence="4">
    <location>
        <begin position="1754"/>
        <end position="1774"/>
    </location>
</feature>
<feature type="domain" description="ABC transporter 1" evidence="5">
    <location>
        <begin position="805"/>
        <end position="1036"/>
    </location>
</feature>
<feature type="domain" description="ABC transporter 2" evidence="5">
    <location>
        <begin position="1818"/>
        <end position="2050"/>
    </location>
</feature>
<feature type="region of interest" description="Disordered" evidence="6">
    <location>
        <begin position="1044"/>
        <end position="1086"/>
    </location>
</feature>
<feature type="region of interest" description="Disordered" evidence="6">
    <location>
        <begin position="2129"/>
        <end position="2170"/>
    </location>
</feature>
<feature type="compositionally biased region" description="Basic and acidic residues" evidence="6">
    <location>
        <begin position="1045"/>
        <end position="1066"/>
    </location>
</feature>
<feature type="binding site" evidence="5">
    <location>
        <begin position="839"/>
        <end position="846"/>
    </location>
    <ligand>
        <name>ATP</name>
        <dbReference type="ChEBI" id="CHEBI:30616"/>
        <label>1</label>
    </ligand>
</feature>
<feature type="binding site" evidence="5">
    <location>
        <begin position="1852"/>
        <end position="1859"/>
    </location>
    <ligand>
        <name>ATP</name>
        <dbReference type="ChEBI" id="CHEBI:30616"/>
        <label>2</label>
    </ligand>
</feature>
<feature type="glycosylation site" description="N-linked (GlcNAc...) asparagine" evidence="4">
    <location>
        <position position="309"/>
    </location>
</feature>
<feature type="disulfide bond" evidence="1">
    <location>
        <begin position="75"/>
        <end position="222"/>
    </location>
</feature>
<feature type="disulfide bond" evidence="1">
    <location>
        <begin position="1370"/>
        <end position="1384"/>
    </location>
</feature>
<keyword id="KW-0067">ATP-binding</keyword>
<keyword id="KW-1003">Cell membrane</keyword>
<keyword id="KW-0966">Cell projection</keyword>
<keyword id="KW-0963">Cytoplasm</keyword>
<keyword id="KW-1015">Disulfide bond</keyword>
<keyword id="KW-0967">Endosome</keyword>
<keyword id="KW-0325">Glycoprotein</keyword>
<keyword id="KW-0333">Golgi apparatus</keyword>
<keyword id="KW-0445">Lipid transport</keyword>
<keyword id="KW-0472">Membrane</keyword>
<keyword id="KW-0547">Nucleotide-binding</keyword>
<keyword id="KW-0581">Phagocytosis</keyword>
<keyword id="KW-1185">Reference proteome</keyword>
<keyword id="KW-0677">Repeat</keyword>
<keyword id="KW-0812">Transmembrane</keyword>
<keyword id="KW-1133">Transmembrane helix</keyword>
<keyword id="KW-0813">Transport</keyword>